<gene>
    <name evidence="1" type="primary">Mob1</name>
    <name type="ORF">GA11155</name>
</gene>
<evidence type="ECO:0000250" key="1">
    <source>
        <dbReference type="UniProtKB" id="Q8IQG1"/>
    </source>
</evidence>
<evidence type="ECO:0000250" key="2">
    <source>
        <dbReference type="UniProtKB" id="Q9H8S9"/>
    </source>
</evidence>
<evidence type="ECO:0000255" key="3"/>
<evidence type="ECO:0000256" key="4">
    <source>
        <dbReference type="SAM" id="MobiDB-lite"/>
    </source>
</evidence>
<organism>
    <name type="scientific">Drosophila pseudoobscura pseudoobscura</name>
    <name type="common">Fruit fly</name>
    <dbReference type="NCBI Taxonomy" id="46245"/>
    <lineage>
        <taxon>Eukaryota</taxon>
        <taxon>Metazoa</taxon>
        <taxon>Ecdysozoa</taxon>
        <taxon>Arthropoda</taxon>
        <taxon>Hexapoda</taxon>
        <taxon>Insecta</taxon>
        <taxon>Pterygota</taxon>
        <taxon>Neoptera</taxon>
        <taxon>Endopterygota</taxon>
        <taxon>Diptera</taxon>
        <taxon>Brachycera</taxon>
        <taxon>Muscomorpha</taxon>
        <taxon>Ephydroidea</taxon>
        <taxon>Drosophilidae</taxon>
        <taxon>Drosophila</taxon>
        <taxon>Sophophora</taxon>
    </lineage>
</organism>
<proteinExistence type="inferred from homology"/>
<feature type="chain" id="PRO_0000279702" description="MOB kinase activator-like 2">
    <location>
        <begin position="1"/>
        <end position="562"/>
    </location>
</feature>
<feature type="region of interest" description="Disordered" evidence="4">
    <location>
        <begin position="30"/>
        <end position="50"/>
    </location>
</feature>
<feature type="region of interest" description="Disordered" evidence="4">
    <location>
        <begin position="304"/>
        <end position="378"/>
    </location>
</feature>
<feature type="region of interest" description="Disordered" evidence="4">
    <location>
        <begin position="468"/>
        <end position="523"/>
    </location>
</feature>
<feature type="region of interest" description="Disordered" evidence="4">
    <location>
        <begin position="538"/>
        <end position="562"/>
    </location>
</feature>
<feature type="compositionally biased region" description="Low complexity" evidence="4">
    <location>
        <begin position="31"/>
        <end position="45"/>
    </location>
</feature>
<feature type="compositionally biased region" description="Low complexity" evidence="4">
    <location>
        <begin position="305"/>
        <end position="349"/>
    </location>
</feature>
<feature type="compositionally biased region" description="Low complexity" evidence="4">
    <location>
        <begin position="357"/>
        <end position="378"/>
    </location>
</feature>
<feature type="compositionally biased region" description="Low complexity" evidence="4">
    <location>
        <begin position="471"/>
        <end position="481"/>
    </location>
</feature>
<feature type="compositionally biased region" description="Basic residues" evidence="4">
    <location>
        <begin position="482"/>
        <end position="514"/>
    </location>
</feature>
<feature type="compositionally biased region" description="Low complexity" evidence="4">
    <location>
        <begin position="547"/>
        <end position="562"/>
    </location>
</feature>
<feature type="binding site" evidence="2">
    <location>
        <position position="170"/>
    </location>
    <ligand>
        <name>Zn(2+)</name>
        <dbReference type="ChEBI" id="CHEBI:29105"/>
    </ligand>
</feature>
<feature type="binding site" evidence="2">
    <location>
        <position position="175"/>
    </location>
    <ligand>
        <name>Zn(2+)</name>
        <dbReference type="ChEBI" id="CHEBI:29105"/>
    </ligand>
</feature>
<feature type="binding site" evidence="2">
    <location>
        <position position="250"/>
    </location>
    <ligand>
        <name>Zn(2+)</name>
        <dbReference type="ChEBI" id="CHEBI:29105"/>
    </ligand>
</feature>
<feature type="binding site" evidence="2">
    <location>
        <position position="255"/>
    </location>
    <ligand>
        <name>Zn(2+)</name>
        <dbReference type="ChEBI" id="CHEBI:29105"/>
    </ligand>
</feature>
<accession>Q2LZ59</accession>
<sequence>MKETLSSKVPTTRTVGVTFDSVSESKSKLKSGSVQGTTATATATGPPSPPSSYVIKCLLKTARFMWQVTTIPAKIGDTLGTLYRYAQDSVDTFLCVAGKARRKERDGDQNSTDTKLYLEESVLERKLPEADLKALVDLPAGLDYNEWLASHTLALFEHVNLVYGTISEFCTQSGCADMTGPGNRTYLWFDEKGKKTRVAAPQYIDYVMTFTQKTVSDESIFPTKYANEFPGSFESIARKILRLQFHVIAHLYAAHFREIALLGLHTHLNLTFAHLTALHRRFNLIDEKETDVLRDLEVALRLTDDTSGQDSSSSVHEHSSSSSSPPVQHQQHQHQQQHNNSSSTSNSTSPAEALHVNSQSNSNSHSNSSNSHTTTASASASLIDGDSAAPPICTQPEAGAGCKPAGSSGLLGGILGDLTSGEFGDTTRYCTSAVPQAAASSSASAAGPGADGAASAALNNGAGALHLNFSNNNNNNHNLNHLNHHHHHHHHQHHHQHHPHGHHGHQGHQGHQGHHQAPASTTVPHSGLIQCNAAGAVGASAGGGGNAVSAATGGATSASSTA</sequence>
<dbReference type="EMBL" id="CH379069">
    <property type="protein sequence ID" value="EAL29650.2"/>
    <property type="molecule type" value="Genomic_DNA"/>
</dbReference>
<dbReference type="SMR" id="Q2LZ59"/>
<dbReference type="FunCoup" id="Q2LZ59">
    <property type="interactions" value="64"/>
</dbReference>
<dbReference type="STRING" id="46245.Q2LZ59"/>
<dbReference type="eggNOG" id="KOG0440">
    <property type="taxonomic scope" value="Eukaryota"/>
</dbReference>
<dbReference type="HOGENOM" id="CLU_022966_0_0_1"/>
<dbReference type="InParanoid" id="Q2LZ59"/>
<dbReference type="OMA" id="MYLWFDE"/>
<dbReference type="ChiTaRS" id="Mob2">
    <property type="organism name" value="fly"/>
</dbReference>
<dbReference type="Proteomes" id="UP000001819">
    <property type="component" value="Unplaced"/>
</dbReference>
<dbReference type="GO" id="GO:0005737">
    <property type="term" value="C:cytoplasm"/>
    <property type="evidence" value="ECO:0000250"/>
    <property type="project" value="UniProtKB"/>
</dbReference>
<dbReference type="GO" id="GO:0005634">
    <property type="term" value="C:nucleus"/>
    <property type="evidence" value="ECO:0007669"/>
    <property type="project" value="UniProtKB-SubCell"/>
</dbReference>
<dbReference type="GO" id="GO:0046872">
    <property type="term" value="F:metal ion binding"/>
    <property type="evidence" value="ECO:0007669"/>
    <property type="project" value="UniProtKB-KW"/>
</dbReference>
<dbReference type="GO" id="GO:0000902">
    <property type="term" value="P:cell morphogenesis"/>
    <property type="evidence" value="ECO:0000250"/>
    <property type="project" value="UniProtKB"/>
</dbReference>
<dbReference type="FunFam" id="1.20.140.30:FF:000003">
    <property type="entry name" value="MOB kinase activator 2"/>
    <property type="match status" value="1"/>
</dbReference>
<dbReference type="Gene3D" id="1.20.140.30">
    <property type="entry name" value="MOB kinase activator"/>
    <property type="match status" value="1"/>
</dbReference>
<dbReference type="InterPro" id="IPR005301">
    <property type="entry name" value="MOB_kinase_act_fam"/>
</dbReference>
<dbReference type="InterPro" id="IPR036703">
    <property type="entry name" value="MOB_kinase_act_sf"/>
</dbReference>
<dbReference type="PANTHER" id="PTHR22599">
    <property type="entry name" value="MPS ONE BINDER KINASE ACTIVATOR-LIKE MOB"/>
    <property type="match status" value="1"/>
</dbReference>
<dbReference type="Pfam" id="PF03637">
    <property type="entry name" value="Mob1_phocein"/>
    <property type="match status" value="1"/>
</dbReference>
<dbReference type="SMART" id="SM01388">
    <property type="entry name" value="Mob1_phocein"/>
    <property type="match status" value="1"/>
</dbReference>
<dbReference type="SUPFAM" id="SSF101152">
    <property type="entry name" value="Mob1/phocein"/>
    <property type="match status" value="1"/>
</dbReference>
<protein>
    <recommendedName>
        <fullName>MOB kinase activator-like 2</fullName>
    </recommendedName>
    <alternativeName>
        <fullName>Mob as tumor suppressor protein 2</fullName>
    </alternativeName>
    <alternativeName>
        <fullName>Mps one binder kinase activator-like 2</fullName>
    </alternativeName>
</protein>
<name>MOB2_DROPS</name>
<keyword id="KW-0963">Cytoplasm</keyword>
<keyword id="KW-0479">Metal-binding</keyword>
<keyword id="KW-0539">Nucleus</keyword>
<keyword id="KW-1185">Reference proteome</keyword>
<keyword id="KW-0691">RNA editing</keyword>
<keyword id="KW-0862">Zinc</keyword>
<reference key="1">
    <citation type="journal article" date="2005" name="Genome Res.">
        <title>Comparative genome sequencing of Drosophila pseudoobscura: chromosomal, gene, and cis-element evolution.</title>
        <authorList>
            <person name="Richards S."/>
            <person name="Liu Y."/>
            <person name="Bettencourt B.R."/>
            <person name="Hradecky P."/>
            <person name="Letovsky S."/>
            <person name="Nielsen R."/>
            <person name="Thornton K."/>
            <person name="Hubisz M.J."/>
            <person name="Chen R."/>
            <person name="Meisel R.P."/>
            <person name="Couronne O."/>
            <person name="Hua S."/>
            <person name="Smith M.A."/>
            <person name="Zhang P."/>
            <person name="Liu J."/>
            <person name="Bussemaker H.J."/>
            <person name="van Batenburg M.F."/>
            <person name="Howells S.L."/>
            <person name="Scherer S.E."/>
            <person name="Sodergren E."/>
            <person name="Matthews B.B."/>
            <person name="Crosby M.A."/>
            <person name="Schroeder A.J."/>
            <person name="Ortiz-Barrientos D."/>
            <person name="Rives C.M."/>
            <person name="Metzker M.L."/>
            <person name="Muzny D.M."/>
            <person name="Scott G."/>
            <person name="Steffen D."/>
            <person name="Wheeler D.A."/>
            <person name="Worley K.C."/>
            <person name="Havlak P."/>
            <person name="Durbin K.J."/>
            <person name="Egan A."/>
            <person name="Gill R."/>
            <person name="Hume J."/>
            <person name="Morgan M.B."/>
            <person name="Miner G."/>
            <person name="Hamilton C."/>
            <person name="Huang Y."/>
            <person name="Waldron L."/>
            <person name="Verduzco D."/>
            <person name="Clerc-Blankenburg K.P."/>
            <person name="Dubchak I."/>
            <person name="Noor M.A.F."/>
            <person name="Anderson W."/>
            <person name="White K.P."/>
            <person name="Clark A.G."/>
            <person name="Schaeffer S.W."/>
            <person name="Gelbart W.M."/>
            <person name="Weinstock G.M."/>
            <person name="Gibbs R.A."/>
        </authorList>
    </citation>
    <scope>NUCLEOTIDE SEQUENCE [LARGE SCALE GENOMIC DNA]</scope>
    <source>
        <strain>MV2-25 / Tucson 14011-0121.94</strain>
    </source>
</reference>
<comment type="function">
    <text evidence="1">Required for the normal morphogenesis of a variety of polarized outgrowths including epidermal hairs, bristles, arista laterals, and dendrites.</text>
</comment>
<comment type="subunit">
    <text evidence="1">Interacts with and activates trc, also interacts with wts.</text>
</comment>
<comment type="subcellular location">
    <subcellularLocation>
        <location evidence="1">Cytoplasm</location>
    </subcellularLocation>
    <subcellularLocation>
        <location evidence="1">Nucleus</location>
    </subcellularLocation>
    <text evidence="1">Trc colocalizes with Mob1 to the cell periphery in wing cells and wing hairs.</text>
</comment>
<comment type="similarity">
    <text evidence="3">Belongs to the MOB1/phocein family.</text>
</comment>